<gene>
    <name type="ordered locus">AM793</name>
</gene>
<keyword id="KW-0963">Cytoplasm</keyword>
<keyword id="KW-0378">Hydrolase</keyword>
<keyword id="KW-0546">Nucleotide metabolism</keyword>
<name>NTPP_ANAMM</name>
<sequence length="196" mass="21472">MLKIEGLVLASSSKYRLALLEQIGVVPGEVVSPNIDESLLKGELPRRYCMRMARTKADAEAALRSDKFVLGADTVAYCGKRVLSKTESEDCAVRYLEMLSGRRHRVCTSVCLRSPGGIVHERSVVSVVKFKSMSKGEIEYYISSGQWRGKAGGYGIQGFAGALISWIQGSYSSIAGLPLHETYCLLGGYFDLKHIP</sequence>
<comment type="function">
    <text evidence="1">Nucleoside triphosphate pyrophosphatase. May have a dual role in cell division arrest and in preventing the incorporation of modified nucleotides into cellular nucleic acids.</text>
</comment>
<comment type="catalytic activity">
    <reaction evidence="1">
        <text>a ribonucleoside 5'-triphosphate + H2O = a ribonucleoside 5'-phosphate + diphosphate + H(+)</text>
        <dbReference type="Rhea" id="RHEA:23996"/>
        <dbReference type="ChEBI" id="CHEBI:15377"/>
        <dbReference type="ChEBI" id="CHEBI:15378"/>
        <dbReference type="ChEBI" id="CHEBI:33019"/>
        <dbReference type="ChEBI" id="CHEBI:58043"/>
        <dbReference type="ChEBI" id="CHEBI:61557"/>
        <dbReference type="EC" id="3.6.1.9"/>
    </reaction>
</comment>
<comment type="catalytic activity">
    <reaction evidence="1">
        <text>a 2'-deoxyribonucleoside 5'-triphosphate + H2O = a 2'-deoxyribonucleoside 5'-phosphate + diphosphate + H(+)</text>
        <dbReference type="Rhea" id="RHEA:44644"/>
        <dbReference type="ChEBI" id="CHEBI:15377"/>
        <dbReference type="ChEBI" id="CHEBI:15378"/>
        <dbReference type="ChEBI" id="CHEBI:33019"/>
        <dbReference type="ChEBI" id="CHEBI:61560"/>
        <dbReference type="ChEBI" id="CHEBI:65317"/>
        <dbReference type="EC" id="3.6.1.9"/>
    </reaction>
</comment>
<comment type="cofactor">
    <cofactor evidence="1">
        <name>a divalent metal cation</name>
        <dbReference type="ChEBI" id="CHEBI:60240"/>
    </cofactor>
</comment>
<comment type="subcellular location">
    <subcellularLocation>
        <location evidence="1">Cytoplasm</location>
    </subcellularLocation>
</comment>
<comment type="similarity">
    <text evidence="1">Belongs to the Maf family.</text>
</comment>
<proteinExistence type="inferred from homology"/>
<accession>Q5PAF5</accession>
<organism>
    <name type="scientific">Anaplasma marginale (strain St. Maries)</name>
    <dbReference type="NCBI Taxonomy" id="234826"/>
    <lineage>
        <taxon>Bacteria</taxon>
        <taxon>Pseudomonadati</taxon>
        <taxon>Pseudomonadota</taxon>
        <taxon>Alphaproteobacteria</taxon>
        <taxon>Rickettsiales</taxon>
        <taxon>Anaplasmataceae</taxon>
        <taxon>Anaplasma</taxon>
    </lineage>
</organism>
<dbReference type="EC" id="3.6.1.9" evidence="1"/>
<dbReference type="EMBL" id="CP000030">
    <property type="protein sequence ID" value="AAV86725.1"/>
    <property type="molecule type" value="Genomic_DNA"/>
</dbReference>
<dbReference type="RefSeq" id="WP_011114435.1">
    <property type="nucleotide sequence ID" value="NC_004842.2"/>
</dbReference>
<dbReference type="SMR" id="Q5PAF5"/>
<dbReference type="KEGG" id="ama:AM793"/>
<dbReference type="HOGENOM" id="CLU_040416_2_0_5"/>
<dbReference type="GO" id="GO:0005737">
    <property type="term" value="C:cytoplasm"/>
    <property type="evidence" value="ECO:0007669"/>
    <property type="project" value="UniProtKB-SubCell"/>
</dbReference>
<dbReference type="GO" id="GO:0047429">
    <property type="term" value="F:nucleoside triphosphate diphosphatase activity"/>
    <property type="evidence" value="ECO:0007669"/>
    <property type="project" value="UniProtKB-EC"/>
</dbReference>
<dbReference type="GO" id="GO:0009117">
    <property type="term" value="P:nucleotide metabolic process"/>
    <property type="evidence" value="ECO:0007669"/>
    <property type="project" value="UniProtKB-KW"/>
</dbReference>
<dbReference type="CDD" id="cd00555">
    <property type="entry name" value="Maf"/>
    <property type="match status" value="1"/>
</dbReference>
<dbReference type="Gene3D" id="3.90.950.10">
    <property type="match status" value="1"/>
</dbReference>
<dbReference type="HAMAP" id="MF_00528">
    <property type="entry name" value="Maf"/>
    <property type="match status" value="1"/>
</dbReference>
<dbReference type="InterPro" id="IPR029001">
    <property type="entry name" value="ITPase-like_fam"/>
</dbReference>
<dbReference type="InterPro" id="IPR003697">
    <property type="entry name" value="Maf-like"/>
</dbReference>
<dbReference type="NCBIfam" id="TIGR00172">
    <property type="entry name" value="maf"/>
    <property type="match status" value="1"/>
</dbReference>
<dbReference type="NCBIfam" id="NF010946">
    <property type="entry name" value="PRK14366.1"/>
    <property type="match status" value="1"/>
</dbReference>
<dbReference type="PANTHER" id="PTHR43213">
    <property type="entry name" value="BIFUNCTIONAL DTTP/UTP PYROPHOSPHATASE/METHYLTRANSFERASE PROTEIN-RELATED"/>
    <property type="match status" value="1"/>
</dbReference>
<dbReference type="PANTHER" id="PTHR43213:SF5">
    <property type="entry name" value="BIFUNCTIONAL DTTP_UTP PYROPHOSPHATASE_METHYLTRANSFERASE PROTEIN-RELATED"/>
    <property type="match status" value="1"/>
</dbReference>
<dbReference type="Pfam" id="PF02545">
    <property type="entry name" value="Maf"/>
    <property type="match status" value="1"/>
</dbReference>
<dbReference type="PIRSF" id="PIRSF006305">
    <property type="entry name" value="Maf"/>
    <property type="match status" value="1"/>
</dbReference>
<dbReference type="SUPFAM" id="SSF52972">
    <property type="entry name" value="ITPase-like"/>
    <property type="match status" value="1"/>
</dbReference>
<reference key="1">
    <citation type="journal article" date="2005" name="Proc. Natl. Acad. Sci. U.S.A.">
        <title>Complete genome sequencing of Anaplasma marginale reveals that the surface is skewed to two superfamilies of outer membrane proteins.</title>
        <authorList>
            <person name="Brayton K.A."/>
            <person name="Kappmeyer L.S."/>
            <person name="Herndon D.R."/>
            <person name="Dark M.J."/>
            <person name="Tibbals D.L."/>
            <person name="Palmer G.H."/>
            <person name="McGuire T.C."/>
            <person name="Knowles D.P. Jr."/>
        </authorList>
    </citation>
    <scope>NUCLEOTIDE SEQUENCE [LARGE SCALE GENOMIC DNA]</scope>
    <source>
        <strain>St. Maries</strain>
    </source>
</reference>
<feature type="chain" id="PRO_0000267244" description="Nucleoside triphosphate pyrophosphatase">
    <location>
        <begin position="1"/>
        <end position="196"/>
    </location>
</feature>
<feature type="active site" description="Proton acceptor" evidence="1">
    <location>
        <position position="73"/>
    </location>
</feature>
<evidence type="ECO:0000255" key="1">
    <source>
        <dbReference type="HAMAP-Rule" id="MF_00528"/>
    </source>
</evidence>
<protein>
    <recommendedName>
        <fullName evidence="1">Nucleoside triphosphate pyrophosphatase</fullName>
        <ecNumber evidence="1">3.6.1.9</ecNumber>
    </recommendedName>
    <alternativeName>
        <fullName evidence="1">Nucleotide pyrophosphatase</fullName>
        <shortName evidence="1">Nucleotide PPase</shortName>
    </alternativeName>
</protein>